<keyword id="KW-0150">Chloroplast</keyword>
<keyword id="KW-0378">Hydrolase</keyword>
<keyword id="KW-0934">Plastid</keyword>
<keyword id="KW-0645">Protease</keyword>
<keyword id="KW-0720">Serine protease</keyword>
<evidence type="ECO:0000255" key="1">
    <source>
        <dbReference type="HAMAP-Rule" id="MF_00444"/>
    </source>
</evidence>
<accession>A6YG63</accession>
<geneLocation type="chloroplast"/>
<gene>
    <name evidence="1" type="primary">clpP</name>
</gene>
<name>CLPP_PLETE</name>
<organism>
    <name type="scientific">Pleurastrum terricola</name>
    <name type="common">Filamentous green alga</name>
    <name type="synonym">Leptosira terrestris</name>
    <dbReference type="NCBI Taxonomy" id="34116"/>
    <lineage>
        <taxon>Eukaryota</taxon>
        <taxon>Viridiplantae</taxon>
        <taxon>Chlorophyta</taxon>
        <taxon>core chlorophytes</taxon>
        <taxon>Chlorophyceae</taxon>
        <taxon>CS clade</taxon>
        <taxon>Chlamydomonadales</taxon>
        <taxon>Pleurastraceae</taxon>
        <taxon>Pleurastrum</taxon>
    </lineage>
</organism>
<comment type="function">
    <text evidence="1">Cleaves peptides in various proteins in a process that requires ATP hydrolysis. Has a chymotrypsin-like activity. Plays a major role in the degradation of misfolded proteins.</text>
</comment>
<comment type="catalytic activity">
    <reaction evidence="1">
        <text>Hydrolysis of proteins to small peptides in the presence of ATP and magnesium. alpha-casein is the usual test substrate. In the absence of ATP, only oligopeptides shorter than five residues are hydrolyzed (such as succinyl-Leu-Tyr-|-NHMec, and Leu-Tyr-Leu-|-Tyr-Trp, in which cleavage of the -Tyr-|-Leu- and -Tyr-|-Trp bonds also occurs).</text>
        <dbReference type="EC" id="3.4.21.92"/>
    </reaction>
</comment>
<comment type="subunit">
    <text>Component of the chloroplastic Clp protease core complex.</text>
</comment>
<comment type="subcellular location">
    <subcellularLocation>
        <location evidence="1">Plastid</location>
        <location evidence="1">Chloroplast stroma</location>
    </subcellularLocation>
</comment>
<comment type="similarity">
    <text evidence="1">Belongs to the peptidase S14 family.</text>
</comment>
<proteinExistence type="inferred from homology"/>
<protein>
    <recommendedName>
        <fullName evidence="1">ATP-dependent Clp protease proteolytic subunit</fullName>
        <ecNumber evidence="1">3.4.21.92</ecNumber>
    </recommendedName>
    <alternativeName>
        <fullName evidence="1">Endopeptidase Clp</fullName>
    </alternativeName>
</protein>
<sequence length="196" mass="21757">MPVGVPKVFYALPDEEEADWIDLYHCLYQERLIVICGDLNDEAVNQIVSVLIYLSTRDDSKEFFIYINSPGGSVTSGIAIYDAMRFNNTPVNTIAVGISASMASFILAGGDIGKRLAFPHSRIMIHQPEGGSEGQSSEIVHEAQEVVRIRRQVARIYAQRTGQPLDTIARDMDRDQFMSAREAKTYGIVDLVAAEK</sequence>
<dbReference type="EC" id="3.4.21.92" evidence="1"/>
<dbReference type="EMBL" id="EF506945">
    <property type="protein sequence ID" value="ABO69284.1"/>
    <property type="molecule type" value="Genomic_DNA"/>
</dbReference>
<dbReference type="RefSeq" id="YP_001382140.1">
    <property type="nucleotide sequence ID" value="NC_009681.1"/>
</dbReference>
<dbReference type="SMR" id="A6YG63"/>
<dbReference type="MEROPS" id="S14.002"/>
<dbReference type="GeneID" id="5383749"/>
<dbReference type="GO" id="GO:0009570">
    <property type="term" value="C:chloroplast stroma"/>
    <property type="evidence" value="ECO:0007669"/>
    <property type="project" value="UniProtKB-SubCell"/>
</dbReference>
<dbReference type="GO" id="GO:0009368">
    <property type="term" value="C:endopeptidase Clp complex"/>
    <property type="evidence" value="ECO:0007669"/>
    <property type="project" value="TreeGrafter"/>
</dbReference>
<dbReference type="GO" id="GO:0004176">
    <property type="term" value="F:ATP-dependent peptidase activity"/>
    <property type="evidence" value="ECO:0007669"/>
    <property type="project" value="InterPro"/>
</dbReference>
<dbReference type="GO" id="GO:0051117">
    <property type="term" value="F:ATPase binding"/>
    <property type="evidence" value="ECO:0007669"/>
    <property type="project" value="TreeGrafter"/>
</dbReference>
<dbReference type="GO" id="GO:0004252">
    <property type="term" value="F:serine-type endopeptidase activity"/>
    <property type="evidence" value="ECO:0007669"/>
    <property type="project" value="UniProtKB-UniRule"/>
</dbReference>
<dbReference type="GO" id="GO:0006515">
    <property type="term" value="P:protein quality control for misfolded or incompletely synthesized proteins"/>
    <property type="evidence" value="ECO:0007669"/>
    <property type="project" value="TreeGrafter"/>
</dbReference>
<dbReference type="CDD" id="cd07017">
    <property type="entry name" value="S14_ClpP_2"/>
    <property type="match status" value="1"/>
</dbReference>
<dbReference type="Gene3D" id="3.90.226.10">
    <property type="entry name" value="2-enoyl-CoA Hydratase, Chain A, domain 1"/>
    <property type="match status" value="1"/>
</dbReference>
<dbReference type="HAMAP" id="MF_00444">
    <property type="entry name" value="ClpP"/>
    <property type="match status" value="1"/>
</dbReference>
<dbReference type="InterPro" id="IPR001907">
    <property type="entry name" value="ClpP"/>
</dbReference>
<dbReference type="InterPro" id="IPR029045">
    <property type="entry name" value="ClpP/crotonase-like_dom_sf"/>
</dbReference>
<dbReference type="InterPro" id="IPR023562">
    <property type="entry name" value="ClpP/TepA"/>
</dbReference>
<dbReference type="InterPro" id="IPR033135">
    <property type="entry name" value="ClpP_His_AS"/>
</dbReference>
<dbReference type="PANTHER" id="PTHR10381">
    <property type="entry name" value="ATP-DEPENDENT CLP PROTEASE PROTEOLYTIC SUBUNIT"/>
    <property type="match status" value="1"/>
</dbReference>
<dbReference type="PANTHER" id="PTHR10381:SF15">
    <property type="entry name" value="CHLOROPLASTIC ATP-DEPENDENT CLP PROTEASE PROTEOLYTIC SUBUNIT 1"/>
    <property type="match status" value="1"/>
</dbReference>
<dbReference type="Pfam" id="PF00574">
    <property type="entry name" value="CLP_protease"/>
    <property type="match status" value="1"/>
</dbReference>
<dbReference type="PRINTS" id="PR00127">
    <property type="entry name" value="CLPPROTEASEP"/>
</dbReference>
<dbReference type="SUPFAM" id="SSF52096">
    <property type="entry name" value="ClpP/crotonase"/>
    <property type="match status" value="1"/>
</dbReference>
<dbReference type="PROSITE" id="PS00382">
    <property type="entry name" value="CLP_PROTEASE_HIS"/>
    <property type="match status" value="1"/>
</dbReference>
<reference key="1">
    <citation type="journal article" date="2007" name="BMC Genomics">
        <title>The chloroplast genome sequence of the green alga Leptosira terrestris: multiple losses of the inverted repeat and extensive genome rearrangements within the Trebouxiophyceae.</title>
        <authorList>
            <person name="de Cambiaire J.-C."/>
            <person name="Otis C."/>
            <person name="Turmel M."/>
            <person name="Lemieux C."/>
        </authorList>
    </citation>
    <scope>NUCLEOTIDE SEQUENCE [LARGE SCALE GENOMIC DNA]</scope>
    <source>
        <strain>CCAP 463/2 / UTEX 333</strain>
    </source>
</reference>
<feature type="chain" id="PRO_0000309303" description="ATP-dependent Clp protease proteolytic subunit">
    <location>
        <begin position="1"/>
        <end position="196"/>
    </location>
</feature>
<feature type="active site" description="Nucleophile" evidence="1">
    <location>
        <position position="101"/>
    </location>
</feature>
<feature type="active site" evidence="1">
    <location>
        <position position="126"/>
    </location>
</feature>